<keyword id="KW-0963">Cytoplasm</keyword>
<keyword id="KW-1185">Reference proteome</keyword>
<keyword id="KW-0690">Ribosome biogenesis</keyword>
<keyword id="KW-0694">RNA-binding</keyword>
<keyword id="KW-0699">rRNA-binding</keyword>
<feature type="chain" id="PRO_0000257632" description="Dual-action ribosomal maturation protein DarP">
    <location>
        <begin position="1"/>
        <end position="180"/>
    </location>
</feature>
<feature type="region of interest" description="Disordered" evidence="2">
    <location>
        <begin position="1"/>
        <end position="21"/>
    </location>
</feature>
<feature type="compositionally biased region" description="Basic and acidic residues" evidence="2">
    <location>
        <begin position="1"/>
        <end position="13"/>
    </location>
</feature>
<evidence type="ECO:0000255" key="1">
    <source>
        <dbReference type="HAMAP-Rule" id="MF_00765"/>
    </source>
</evidence>
<evidence type="ECO:0000256" key="2">
    <source>
        <dbReference type="SAM" id="MobiDB-lite"/>
    </source>
</evidence>
<name>DARP_METFK</name>
<sequence>MKPDKTENTEHGIEPVSKTKRKAEADALQAIGVTLTELPRDKLNKLDLPEALLDAVNEAKRITSNGALRRQMQYIGRLMRDIDTDPIVEQLQRWEGSHTEENARFHRLEQWRNRLIEDESALSEFISEFPNTEAQQVRNLIRNARREHAAGKPPKSSRELFKLLRSITEAPPPGTELSAD</sequence>
<proteinExistence type="inferred from homology"/>
<organism>
    <name type="scientific">Methylobacillus flagellatus (strain ATCC 51484 / DSM 6875 / VKM B-1610 / KT)</name>
    <dbReference type="NCBI Taxonomy" id="265072"/>
    <lineage>
        <taxon>Bacteria</taxon>
        <taxon>Pseudomonadati</taxon>
        <taxon>Pseudomonadota</taxon>
        <taxon>Betaproteobacteria</taxon>
        <taxon>Nitrosomonadales</taxon>
        <taxon>Methylophilaceae</taxon>
        <taxon>Methylobacillus</taxon>
    </lineage>
</organism>
<reference key="1">
    <citation type="submission" date="2006-03" db="EMBL/GenBank/DDBJ databases">
        <title>Complete sequence of Methylobacillus flagellatus KT.</title>
        <authorList>
            <consortium name="US DOE Joint Genome Institute"/>
            <person name="Copeland A."/>
            <person name="Lucas S."/>
            <person name="Lapidus A."/>
            <person name="Barry K."/>
            <person name="Detter J.C."/>
            <person name="Glavina del Rio T."/>
            <person name="Hammon N."/>
            <person name="Israni S."/>
            <person name="Dalin E."/>
            <person name="Tice H."/>
            <person name="Pitluck S."/>
            <person name="Brettin T."/>
            <person name="Bruce D."/>
            <person name="Han C."/>
            <person name="Tapia R."/>
            <person name="Saunders E."/>
            <person name="Gilna P."/>
            <person name="Schmutz J."/>
            <person name="Larimer F."/>
            <person name="Land M."/>
            <person name="Kyrpides N."/>
            <person name="Anderson I."/>
            <person name="Richardson P."/>
        </authorList>
    </citation>
    <scope>NUCLEOTIDE SEQUENCE [LARGE SCALE GENOMIC DNA]</scope>
    <source>
        <strain>ATCC 51484 / DSM 6875 / VKM B-1610 / KT</strain>
    </source>
</reference>
<protein>
    <recommendedName>
        <fullName evidence="1">Dual-action ribosomal maturation protein DarP</fullName>
    </recommendedName>
    <alternativeName>
        <fullName evidence="1">Large ribosomal subunit assembly factor DarP</fullName>
    </alternativeName>
</protein>
<accession>Q1H3T4</accession>
<gene>
    <name evidence="1" type="primary">darP</name>
    <name type="ordered locus">Mfla_0583</name>
</gene>
<comment type="function">
    <text evidence="1">Member of a network of 50S ribosomal subunit biogenesis factors which assembles along the 30S-50S interface, preventing incorrect 23S rRNA structures from forming. Promotes peptidyl transferase center (PTC) maturation.</text>
</comment>
<comment type="subcellular location">
    <subcellularLocation>
        <location evidence="1">Cytoplasm</location>
    </subcellularLocation>
    <text evidence="1">Associates with late stage pre-50S ribosomal subunits.</text>
</comment>
<comment type="similarity">
    <text evidence="1">Belongs to the DarP family.</text>
</comment>
<dbReference type="EMBL" id="CP000284">
    <property type="protein sequence ID" value="ABE48853.1"/>
    <property type="molecule type" value="Genomic_DNA"/>
</dbReference>
<dbReference type="RefSeq" id="WP_011478950.1">
    <property type="nucleotide sequence ID" value="NC_007947.1"/>
</dbReference>
<dbReference type="SMR" id="Q1H3T4"/>
<dbReference type="STRING" id="265072.Mfla_0583"/>
<dbReference type="KEGG" id="mfa:Mfla_0583"/>
<dbReference type="eggNOG" id="COG3028">
    <property type="taxonomic scope" value="Bacteria"/>
</dbReference>
<dbReference type="HOGENOM" id="CLU_106757_2_0_4"/>
<dbReference type="OrthoDB" id="5293604at2"/>
<dbReference type="Proteomes" id="UP000002440">
    <property type="component" value="Chromosome"/>
</dbReference>
<dbReference type="GO" id="GO:0005829">
    <property type="term" value="C:cytosol"/>
    <property type="evidence" value="ECO:0007669"/>
    <property type="project" value="TreeGrafter"/>
</dbReference>
<dbReference type="GO" id="GO:0043022">
    <property type="term" value="F:ribosome binding"/>
    <property type="evidence" value="ECO:0007669"/>
    <property type="project" value="UniProtKB-UniRule"/>
</dbReference>
<dbReference type="GO" id="GO:0019843">
    <property type="term" value="F:rRNA binding"/>
    <property type="evidence" value="ECO:0007669"/>
    <property type="project" value="UniProtKB-UniRule"/>
</dbReference>
<dbReference type="GO" id="GO:1902626">
    <property type="term" value="P:assembly of large subunit precursor of preribosome"/>
    <property type="evidence" value="ECO:0007669"/>
    <property type="project" value="UniProtKB-UniRule"/>
</dbReference>
<dbReference type="CDD" id="cd16331">
    <property type="entry name" value="YjgA-like"/>
    <property type="match status" value="1"/>
</dbReference>
<dbReference type="Gene3D" id="1.10.60.30">
    <property type="entry name" value="PSPTO4464-like domains"/>
    <property type="match status" value="2"/>
</dbReference>
<dbReference type="HAMAP" id="MF_00765">
    <property type="entry name" value="DarP"/>
    <property type="match status" value="1"/>
</dbReference>
<dbReference type="InterPro" id="IPR006839">
    <property type="entry name" value="DarP"/>
</dbReference>
<dbReference type="InterPro" id="IPR023153">
    <property type="entry name" value="DarP_sf"/>
</dbReference>
<dbReference type="NCBIfam" id="NF003593">
    <property type="entry name" value="PRK05255.1-1"/>
    <property type="match status" value="1"/>
</dbReference>
<dbReference type="PANTHER" id="PTHR38101">
    <property type="entry name" value="UPF0307 PROTEIN YJGA"/>
    <property type="match status" value="1"/>
</dbReference>
<dbReference type="PANTHER" id="PTHR38101:SF1">
    <property type="entry name" value="UPF0307 PROTEIN YJGA"/>
    <property type="match status" value="1"/>
</dbReference>
<dbReference type="Pfam" id="PF04751">
    <property type="entry name" value="DarP"/>
    <property type="match status" value="1"/>
</dbReference>
<dbReference type="PIRSF" id="PIRSF016183">
    <property type="entry name" value="UCP016183"/>
    <property type="match status" value="1"/>
</dbReference>
<dbReference type="SUPFAM" id="SSF158710">
    <property type="entry name" value="PSPTO4464-like"/>
    <property type="match status" value="1"/>
</dbReference>